<reference key="1">
    <citation type="journal article" date="2005" name="Nat. Biotechnol.">
        <title>The genome sequence of the ethanologenic bacterium Zymomonas mobilis ZM4.</title>
        <authorList>
            <person name="Seo J.-S."/>
            <person name="Chong H."/>
            <person name="Park H.S."/>
            <person name="Yoon K.-O."/>
            <person name="Jung C."/>
            <person name="Kim J.J."/>
            <person name="Hong J.H."/>
            <person name="Kim H."/>
            <person name="Kim J.-H."/>
            <person name="Kil J.-I."/>
            <person name="Park C.J."/>
            <person name="Oh H.-M."/>
            <person name="Lee J.-S."/>
            <person name="Jin S.-J."/>
            <person name="Um H.-W."/>
            <person name="Lee H.-J."/>
            <person name="Oh S.-J."/>
            <person name="Kim J.Y."/>
            <person name="Kang H.L."/>
            <person name="Lee S.Y."/>
            <person name="Lee K.J."/>
            <person name="Kang H.S."/>
        </authorList>
    </citation>
    <scope>NUCLEOTIDE SEQUENCE [LARGE SCALE GENOMIC DNA]</scope>
    <source>
        <strain>ATCC 31821 / ZM4 / CP4</strain>
    </source>
</reference>
<feature type="chain" id="PRO_0000172183" description="Putative pre-16S rRNA nuclease">
    <location>
        <begin position="1"/>
        <end position="163"/>
    </location>
</feature>
<keyword id="KW-0963">Cytoplasm</keyword>
<keyword id="KW-0378">Hydrolase</keyword>
<keyword id="KW-0540">Nuclease</keyword>
<keyword id="KW-1185">Reference proteome</keyword>
<keyword id="KW-0690">Ribosome biogenesis</keyword>
<name>YQGF_ZYMMO</name>
<gene>
    <name type="ordered locus">ZMO0785</name>
</gene>
<comment type="function">
    <text evidence="1">Could be a nuclease involved in processing of the 5'-end of pre-16S rRNA.</text>
</comment>
<comment type="subcellular location">
    <subcellularLocation>
        <location evidence="1">Cytoplasm</location>
    </subcellularLocation>
</comment>
<comment type="similarity">
    <text evidence="1">Belongs to the YqgF nuclease family.</text>
</comment>
<comment type="sequence caution" evidence="2">
    <conflict type="erroneous initiation">
        <sequence resource="EMBL-CDS" id="AAV89409"/>
    </conflict>
    <text>Extended N-terminus.</text>
</comment>
<dbReference type="EC" id="3.1.-.-" evidence="1"/>
<dbReference type="EMBL" id="AE008692">
    <property type="protein sequence ID" value="AAV89409.1"/>
    <property type="status" value="ALT_INIT"/>
    <property type="molecule type" value="Genomic_DNA"/>
</dbReference>
<dbReference type="SMR" id="Q5NPF1"/>
<dbReference type="STRING" id="264203.ZMO0785"/>
<dbReference type="KEGG" id="zmo:ZMO0785"/>
<dbReference type="eggNOG" id="COG0816">
    <property type="taxonomic scope" value="Bacteria"/>
</dbReference>
<dbReference type="HOGENOM" id="CLU_098240_1_1_5"/>
<dbReference type="Proteomes" id="UP000001173">
    <property type="component" value="Chromosome"/>
</dbReference>
<dbReference type="GO" id="GO:0005829">
    <property type="term" value="C:cytosol"/>
    <property type="evidence" value="ECO:0007669"/>
    <property type="project" value="TreeGrafter"/>
</dbReference>
<dbReference type="GO" id="GO:0004518">
    <property type="term" value="F:nuclease activity"/>
    <property type="evidence" value="ECO:0007669"/>
    <property type="project" value="UniProtKB-KW"/>
</dbReference>
<dbReference type="GO" id="GO:0000967">
    <property type="term" value="P:rRNA 5'-end processing"/>
    <property type="evidence" value="ECO:0007669"/>
    <property type="project" value="UniProtKB-UniRule"/>
</dbReference>
<dbReference type="CDD" id="cd16964">
    <property type="entry name" value="YqgF"/>
    <property type="match status" value="1"/>
</dbReference>
<dbReference type="Gene3D" id="3.30.420.140">
    <property type="entry name" value="YqgF/RNase H-like domain"/>
    <property type="match status" value="1"/>
</dbReference>
<dbReference type="HAMAP" id="MF_00651">
    <property type="entry name" value="Nuclease_YqgF"/>
    <property type="match status" value="1"/>
</dbReference>
<dbReference type="InterPro" id="IPR012337">
    <property type="entry name" value="RNaseH-like_sf"/>
</dbReference>
<dbReference type="InterPro" id="IPR005227">
    <property type="entry name" value="YqgF"/>
</dbReference>
<dbReference type="InterPro" id="IPR006641">
    <property type="entry name" value="YqgF/RNaseH-like_dom"/>
</dbReference>
<dbReference type="InterPro" id="IPR037027">
    <property type="entry name" value="YqgF/RNaseH-like_dom_sf"/>
</dbReference>
<dbReference type="NCBIfam" id="TIGR00250">
    <property type="entry name" value="RNAse_H_YqgF"/>
    <property type="match status" value="1"/>
</dbReference>
<dbReference type="PANTHER" id="PTHR33317">
    <property type="entry name" value="POLYNUCLEOTIDYL TRANSFERASE, RIBONUCLEASE H-LIKE SUPERFAMILY PROTEIN"/>
    <property type="match status" value="1"/>
</dbReference>
<dbReference type="PANTHER" id="PTHR33317:SF4">
    <property type="entry name" value="POLYNUCLEOTIDYL TRANSFERASE, RIBONUCLEASE H-LIKE SUPERFAMILY PROTEIN"/>
    <property type="match status" value="1"/>
</dbReference>
<dbReference type="Pfam" id="PF03652">
    <property type="entry name" value="RuvX"/>
    <property type="match status" value="1"/>
</dbReference>
<dbReference type="SMART" id="SM00732">
    <property type="entry name" value="YqgFc"/>
    <property type="match status" value="1"/>
</dbReference>
<dbReference type="SUPFAM" id="SSF53098">
    <property type="entry name" value="Ribonuclease H-like"/>
    <property type="match status" value="1"/>
</dbReference>
<protein>
    <recommendedName>
        <fullName evidence="1">Putative pre-16S rRNA nuclease</fullName>
        <ecNumber evidence="1">3.1.-.-</ecNumber>
    </recommendedName>
</protein>
<organism>
    <name type="scientific">Zymomonas mobilis subsp. mobilis (strain ATCC 31821 / ZM4 / CP4)</name>
    <dbReference type="NCBI Taxonomy" id="264203"/>
    <lineage>
        <taxon>Bacteria</taxon>
        <taxon>Pseudomonadati</taxon>
        <taxon>Pseudomonadota</taxon>
        <taxon>Alphaproteobacteria</taxon>
        <taxon>Sphingomonadales</taxon>
        <taxon>Zymomonadaceae</taxon>
        <taxon>Zymomonas</taxon>
    </lineage>
</organism>
<proteinExistence type="inferred from homology"/>
<sequence>MDEKREENILKKQEELRLFQEALPRKGRLAGLDVGTKTIGLALCDSQWIIASPAETIRRKKFTLDLELLRQFVEKQQVKGLVIGLPLNLDGSDSPRTQSVRAFAKNVAPLSLPVLMWDERWSTKAVTRTLLEADASRARRSEVVDKMAAAYILQGAIDSFAMF</sequence>
<accession>Q5NPF1</accession>
<evidence type="ECO:0000255" key="1">
    <source>
        <dbReference type="HAMAP-Rule" id="MF_00651"/>
    </source>
</evidence>
<evidence type="ECO:0000305" key="2"/>